<proteinExistence type="inferred from homology"/>
<organism>
    <name type="scientific">Alcelaphine herpesvirus 1 (strain C500)</name>
    <name type="common">AlHV-1</name>
    <name type="synonym">Malignant catarrhal fever virus</name>
    <dbReference type="NCBI Taxonomy" id="654901"/>
    <lineage>
        <taxon>Viruses</taxon>
        <taxon>Duplodnaviria</taxon>
        <taxon>Heunggongvirae</taxon>
        <taxon>Peploviricota</taxon>
        <taxon>Herviviricetes</taxon>
        <taxon>Herpesvirales</taxon>
        <taxon>Orthoherpesviridae</taxon>
        <taxon>Gammaherpesvirinae</taxon>
        <taxon>Macavirus</taxon>
        <taxon>Macavirus alcelaphinegamma1</taxon>
    </lineage>
</organism>
<keyword id="KW-0378">Hydrolase</keyword>
<keyword id="KW-0460">Magnesium</keyword>
<keyword id="KW-0479">Metal-binding</keyword>
<keyword id="KW-0546">Nucleotide metabolism</keyword>
<keyword id="KW-1185">Reference proteome</keyword>
<gene>
    <name evidence="1" type="primary">DUT</name>
    <name type="ordered locus">54</name>
</gene>
<dbReference type="EC" id="3.6.1.23" evidence="1"/>
<dbReference type="EMBL" id="AF005370">
    <property type="protein sequence ID" value="AAC58101.1"/>
    <property type="molecule type" value="Genomic_DNA"/>
</dbReference>
<dbReference type="PIR" id="T03149">
    <property type="entry name" value="T03149"/>
</dbReference>
<dbReference type="RefSeq" id="NP_065553.1">
    <property type="nucleotide sequence ID" value="NC_002531.1"/>
</dbReference>
<dbReference type="SMR" id="O36404"/>
<dbReference type="KEGG" id="vg:911778"/>
<dbReference type="Proteomes" id="UP000000941">
    <property type="component" value="Segment"/>
</dbReference>
<dbReference type="GO" id="GO:0004170">
    <property type="term" value="F:dUTP diphosphatase activity"/>
    <property type="evidence" value="ECO:0007669"/>
    <property type="project" value="UniProtKB-EC"/>
</dbReference>
<dbReference type="GO" id="GO:0046872">
    <property type="term" value="F:metal ion binding"/>
    <property type="evidence" value="ECO:0007669"/>
    <property type="project" value="UniProtKB-KW"/>
</dbReference>
<dbReference type="GO" id="GO:0046080">
    <property type="term" value="P:dUTP metabolic process"/>
    <property type="evidence" value="ECO:0007669"/>
    <property type="project" value="InterPro"/>
</dbReference>
<dbReference type="Gene3D" id="2.70.40.10">
    <property type="match status" value="2"/>
</dbReference>
<dbReference type="HAMAP" id="MF_04031">
    <property type="entry name" value="HSV_DUT"/>
    <property type="match status" value="1"/>
</dbReference>
<dbReference type="InterPro" id="IPR029054">
    <property type="entry name" value="dUTPase-like"/>
</dbReference>
<dbReference type="InterPro" id="IPR036157">
    <property type="entry name" value="dUTPase-like_sf"/>
</dbReference>
<dbReference type="InterPro" id="IPR034745">
    <property type="entry name" value="HSV_DUT"/>
</dbReference>
<dbReference type="Pfam" id="PF00692">
    <property type="entry name" value="dUTPase"/>
    <property type="match status" value="1"/>
</dbReference>
<dbReference type="SUPFAM" id="SSF51283">
    <property type="entry name" value="dUTPase-like"/>
    <property type="match status" value="2"/>
</dbReference>
<feature type="chain" id="PRO_0000405754" description="Deoxyuridine 5'-triphosphate nucleotidohydrolase">
    <location>
        <begin position="1"/>
        <end position="298"/>
    </location>
</feature>
<feature type="binding site" evidence="1">
    <location>
        <begin position="180"/>
        <end position="182"/>
    </location>
    <ligand>
        <name>substrate</name>
    </ligand>
</feature>
<evidence type="ECO:0000255" key="1">
    <source>
        <dbReference type="HAMAP-Rule" id="MF_04031"/>
    </source>
</evidence>
<protein>
    <recommendedName>
        <fullName evidence="1">Deoxyuridine 5'-triphosphate nucleotidohydrolase</fullName>
        <shortName evidence="1">dUTPase</shortName>
        <ecNumber evidence="1">3.6.1.23</ecNumber>
    </recommendedName>
    <alternativeName>
        <fullName evidence="1">dUTP pyrophosphatase</fullName>
    </alternativeName>
</protein>
<sequence length="298" mass="33095">MSRTLSMRRRQRLEMYYKKVPSVFTVTSNQEESTLQLVNNKPVVIEPFRSSVVPLGVYLRCLPGYACMLLANTYRNVTFHPGLIDPTYMGELKLICNNRTDAYVVVPAGRLKVTVLAFTFLSPILTGPSVLSPPQYTDDAGYDLCLDQLVMVLPLKAFTFQLALTCPIQSKNFTPVVLGRSGLAAKGLSITPCKWKGDVLRLSMFNHTSETIILPEGSRLCQVVFMHNDHLPTIKPRILAAFLFQHRLMDMPFCQSRVSFIDIQKDPCTSTSTLFQDSTGNSISDATRGSKGLGSSGI</sequence>
<name>DUT_ALHV1</name>
<accession>O36404</accession>
<organismHost>
    <name type="scientific">Connochaetes taurinus</name>
    <name type="common">Blue wildebeest</name>
    <dbReference type="NCBI Taxonomy" id="9927"/>
</organismHost>
<comment type="function">
    <text evidence="1">Involved in nucleotide metabolism: produces dUMP, the immediate precursor of thymidine nucleotides and decreases the intracellular concentration of dUTP to avoid uracil incorporation into viral DNA.</text>
</comment>
<comment type="catalytic activity">
    <reaction evidence="1">
        <text>dUTP + H2O = dUMP + diphosphate + H(+)</text>
        <dbReference type="Rhea" id="RHEA:10248"/>
        <dbReference type="ChEBI" id="CHEBI:15377"/>
        <dbReference type="ChEBI" id="CHEBI:15378"/>
        <dbReference type="ChEBI" id="CHEBI:33019"/>
        <dbReference type="ChEBI" id="CHEBI:61555"/>
        <dbReference type="ChEBI" id="CHEBI:246422"/>
        <dbReference type="EC" id="3.6.1.23"/>
    </reaction>
</comment>
<comment type="cofactor">
    <cofactor evidence="1">
        <name>Mg(2+)</name>
        <dbReference type="ChEBI" id="CHEBI:18420"/>
    </cofactor>
</comment>
<comment type="similarity">
    <text evidence="1">Belongs to the dUTPase family.</text>
</comment>
<reference key="1">
    <citation type="journal article" date="1997" name="J. Virol.">
        <title>Primary structure of the alcelaphine herpesvirus 1 genome.</title>
        <authorList>
            <person name="Ensser A."/>
            <person name="Pflanz R."/>
            <person name="Fleckenstein B."/>
        </authorList>
    </citation>
    <scope>NUCLEOTIDE SEQUENCE [LARGE SCALE GENOMIC DNA]</scope>
</reference>